<accession>Q06588</accession>
<accession>Q94K94</accession>
<accession>Q9S9K8</accession>
<organism>
    <name type="scientific">Arabidopsis thaliana</name>
    <name type="common">Mouse-ear cress</name>
    <dbReference type="NCBI Taxonomy" id="3702"/>
    <lineage>
        <taxon>Eukaryota</taxon>
        <taxon>Viridiplantae</taxon>
        <taxon>Streptophyta</taxon>
        <taxon>Embryophyta</taxon>
        <taxon>Tracheophyta</taxon>
        <taxon>Spermatophyta</taxon>
        <taxon>Magnoliopsida</taxon>
        <taxon>eudicotyledons</taxon>
        <taxon>Gunneridae</taxon>
        <taxon>Pentapetalae</taxon>
        <taxon>rosids</taxon>
        <taxon>malvids</taxon>
        <taxon>Brassicales</taxon>
        <taxon>Brassicaceae</taxon>
        <taxon>Camelineae</taxon>
        <taxon>Arabidopsis</taxon>
    </lineage>
</organism>
<dbReference type="EC" id="1.14.17.4"/>
<dbReference type="EMBL" id="X66719">
    <property type="protein sequence ID" value="CAA47251.1"/>
    <property type="molecule type" value="mRNA"/>
</dbReference>
<dbReference type="EMBL" id="AC005322">
    <property type="protein sequence ID" value="AAC97998.1"/>
    <property type="molecule type" value="Genomic_DNA"/>
</dbReference>
<dbReference type="EMBL" id="CP002684">
    <property type="protein sequence ID" value="AEE27779.1"/>
    <property type="molecule type" value="Genomic_DNA"/>
</dbReference>
<dbReference type="EMBL" id="AF370155">
    <property type="protein sequence ID" value="AAK43970.1"/>
    <property type="molecule type" value="mRNA"/>
</dbReference>
<dbReference type="EMBL" id="AY150384">
    <property type="protein sequence ID" value="AAN12929.1"/>
    <property type="molecule type" value="mRNA"/>
</dbReference>
<dbReference type="PIR" id="A86184">
    <property type="entry name" value="A86184"/>
</dbReference>
<dbReference type="PIR" id="JT0755">
    <property type="entry name" value="JT0755"/>
</dbReference>
<dbReference type="SMR" id="Q06588"/>
<dbReference type="BioGRID" id="24580">
    <property type="interactions" value="1"/>
</dbReference>
<dbReference type="FunCoup" id="Q06588">
    <property type="interactions" value="179"/>
</dbReference>
<dbReference type="STRING" id="3702.Q06588"/>
<dbReference type="iPTMnet" id="Q06588"/>
<dbReference type="MetOSite" id="Q06588"/>
<dbReference type="PaxDb" id="3702-AT1G05010.1"/>
<dbReference type="ProteomicsDB" id="244642"/>
<dbReference type="EnsemblPlants" id="AT1G05010.1">
    <property type="protein sequence ID" value="AT1G05010.1"/>
    <property type="gene ID" value="AT1G05010"/>
</dbReference>
<dbReference type="GeneID" id="839345"/>
<dbReference type="Gramene" id="AT1G05010.1">
    <property type="protein sequence ID" value="AT1G05010.1"/>
    <property type="gene ID" value="AT1G05010"/>
</dbReference>
<dbReference type="KEGG" id="ath:AT1G05010"/>
<dbReference type="Araport" id="AT1G05010"/>
<dbReference type="TAIR" id="AT1G05010">
    <property type="gene designation" value="EFE"/>
</dbReference>
<dbReference type="eggNOG" id="KOG0143">
    <property type="taxonomic scope" value="Eukaryota"/>
</dbReference>
<dbReference type="HOGENOM" id="CLU_010119_16_1_1"/>
<dbReference type="InParanoid" id="Q06588"/>
<dbReference type="OMA" id="ISIELMM"/>
<dbReference type="OrthoDB" id="288590at2759"/>
<dbReference type="PhylomeDB" id="Q06588"/>
<dbReference type="UniPathway" id="UPA00384">
    <property type="reaction ID" value="UER00563"/>
</dbReference>
<dbReference type="PRO" id="PR:Q06588"/>
<dbReference type="Proteomes" id="UP000006548">
    <property type="component" value="Chromosome 1"/>
</dbReference>
<dbReference type="ExpressionAtlas" id="Q06588">
    <property type="expression patterns" value="baseline and differential"/>
</dbReference>
<dbReference type="GO" id="GO:0005829">
    <property type="term" value="C:cytosol"/>
    <property type="evidence" value="ECO:0007005"/>
    <property type="project" value="TAIR"/>
</dbReference>
<dbReference type="GO" id="GO:0005576">
    <property type="term" value="C:extracellular region"/>
    <property type="evidence" value="ECO:0007005"/>
    <property type="project" value="TAIR"/>
</dbReference>
<dbReference type="GO" id="GO:0009815">
    <property type="term" value="F:1-aminocyclopropane-1-carboxylate oxidase activity"/>
    <property type="evidence" value="ECO:0000250"/>
    <property type="project" value="TAIR"/>
</dbReference>
<dbReference type="GO" id="GO:0031418">
    <property type="term" value="F:L-ascorbic acid binding"/>
    <property type="evidence" value="ECO:0007669"/>
    <property type="project" value="UniProtKB-KW"/>
</dbReference>
<dbReference type="GO" id="GO:0046872">
    <property type="term" value="F:metal ion binding"/>
    <property type="evidence" value="ECO:0007669"/>
    <property type="project" value="UniProtKB-KW"/>
</dbReference>
<dbReference type="GO" id="GO:0071398">
    <property type="term" value="P:cellular response to fatty acid"/>
    <property type="evidence" value="ECO:0000270"/>
    <property type="project" value="UniProtKB"/>
</dbReference>
<dbReference type="GO" id="GO:0006952">
    <property type="term" value="P:defense response"/>
    <property type="evidence" value="ECO:0007669"/>
    <property type="project" value="UniProtKB-KW"/>
</dbReference>
<dbReference type="GO" id="GO:0009693">
    <property type="term" value="P:ethylene biosynthetic process"/>
    <property type="evidence" value="ECO:0000250"/>
    <property type="project" value="TAIR"/>
</dbReference>
<dbReference type="GO" id="GO:0009835">
    <property type="term" value="P:fruit ripening"/>
    <property type="evidence" value="ECO:0007669"/>
    <property type="project" value="UniProtKB-KW"/>
</dbReference>
<dbReference type="GO" id="GO:0009620">
    <property type="term" value="P:response to fungus"/>
    <property type="evidence" value="ECO:0000270"/>
    <property type="project" value="TAIR"/>
</dbReference>
<dbReference type="FunFam" id="2.60.120.330:FF:000002">
    <property type="entry name" value="1-aminocyclopropane-1-carboxylate oxidase 1"/>
    <property type="match status" value="1"/>
</dbReference>
<dbReference type="Gene3D" id="2.60.120.330">
    <property type="entry name" value="B-lactam Antibiotic, Isopenicillin N Synthase, Chain"/>
    <property type="match status" value="1"/>
</dbReference>
<dbReference type="InterPro" id="IPR026992">
    <property type="entry name" value="DIOX_N"/>
</dbReference>
<dbReference type="InterPro" id="IPR044861">
    <property type="entry name" value="IPNS-like_FE2OG_OXY"/>
</dbReference>
<dbReference type="InterPro" id="IPR027443">
    <property type="entry name" value="IPNS-like_sf"/>
</dbReference>
<dbReference type="InterPro" id="IPR005123">
    <property type="entry name" value="Oxoglu/Fe-dep_dioxygenase_dom"/>
</dbReference>
<dbReference type="InterPro" id="IPR050295">
    <property type="entry name" value="Plant_2OG-oxidoreductases"/>
</dbReference>
<dbReference type="PANTHER" id="PTHR47991">
    <property type="entry name" value="OXOGLUTARATE/IRON-DEPENDENT DIOXYGENASE"/>
    <property type="match status" value="1"/>
</dbReference>
<dbReference type="Pfam" id="PF03171">
    <property type="entry name" value="2OG-FeII_Oxy"/>
    <property type="match status" value="1"/>
</dbReference>
<dbReference type="Pfam" id="PF14226">
    <property type="entry name" value="DIOX_N"/>
    <property type="match status" value="1"/>
</dbReference>
<dbReference type="SUPFAM" id="SSF51197">
    <property type="entry name" value="Clavaminate synthase-like"/>
    <property type="match status" value="1"/>
</dbReference>
<dbReference type="PROSITE" id="PS51471">
    <property type="entry name" value="FE2OG_OXY"/>
    <property type="match status" value="1"/>
</dbReference>
<proteinExistence type="evidence at protein level"/>
<evidence type="ECO:0000255" key="1">
    <source>
        <dbReference type="PROSITE-ProRule" id="PRU00805"/>
    </source>
</evidence>
<evidence type="ECO:0000269" key="2">
    <source>
    </source>
</evidence>
<evidence type="ECO:0000269" key="3">
    <source>
    </source>
</evidence>
<evidence type="ECO:0000269" key="4">
    <source>
    </source>
</evidence>
<evidence type="ECO:0000305" key="5"/>
<evidence type="ECO:0007744" key="6">
    <source>
    </source>
</evidence>
<name>ACCO4_ARATH</name>
<protein>
    <recommendedName>
        <fullName>1-aminocyclopropane-1-carboxylate oxidase 4</fullName>
        <shortName>ACC oxidase</shortName>
        <ecNumber>1.14.17.4</ecNumber>
    </recommendedName>
    <alternativeName>
        <fullName>Ethylene-forming enzyme</fullName>
        <shortName>EFE</shortName>
    </alternativeName>
</protein>
<sequence>MESFPIINLEKLNGEERAITMEKIKDACENWGFFECVNHGISLELLDKVEKMTKEHYKKCMEERFKESIKNRGLDSLRSEVNDVDWESTFYLKHLPVSNISDVPDLDDDYRTLMKDFAGKIEKLSEELLDLLCENLGLEKGYLKKVFYGSKRPTFGTKVSNYPPCPNPDLVKGLRAHTDAGGIILLFQDDKVSGLQLLKDGEWVDVPPVKHSIVVNLGDQLEVITNGKYKSVEHRVLSQTDGEGRMSIASFYNPGSDSVIFPAPELIGKEAEKEKKENYPRFVFEDYMKLYSAVKFQAKEPRFEAMKAMETTVANNVGPLATA</sequence>
<keyword id="KW-0007">Acetylation</keyword>
<keyword id="KW-0266">Ethylene biosynthesis</keyword>
<keyword id="KW-0292">Fruit ripening</keyword>
<keyword id="KW-0408">Iron</keyword>
<keyword id="KW-0479">Metal-binding</keyword>
<keyword id="KW-0560">Oxidoreductase</keyword>
<keyword id="KW-0611">Plant defense</keyword>
<keyword id="KW-1185">Reference proteome</keyword>
<keyword id="KW-0847">Vitamin C</keyword>
<comment type="function">
    <text evidence="4">Enzyme involved in the ethylene biosynthesis. May promote stem elongation by maximizing the extensibility cells, possibly by activating ethylene biosynthesis, in response to very-long-chain fatty acids (VLCFAs C20:0 to C30:0).</text>
</comment>
<comment type="catalytic activity">
    <reaction>
        <text>1-aminocyclopropane-1-carboxylate + L-ascorbate + O2 = ethene + L-dehydroascorbate + hydrogen cyanide + CO2 + 2 H2O</text>
        <dbReference type="Rhea" id="RHEA:23640"/>
        <dbReference type="ChEBI" id="CHEBI:15377"/>
        <dbReference type="ChEBI" id="CHEBI:15379"/>
        <dbReference type="ChEBI" id="CHEBI:16526"/>
        <dbReference type="ChEBI" id="CHEBI:18153"/>
        <dbReference type="ChEBI" id="CHEBI:18407"/>
        <dbReference type="ChEBI" id="CHEBI:38290"/>
        <dbReference type="ChEBI" id="CHEBI:58360"/>
        <dbReference type="ChEBI" id="CHEBI:58539"/>
        <dbReference type="EC" id="1.14.17.4"/>
    </reaction>
</comment>
<comment type="cofactor">
    <cofactor>
        <name>Fe cation</name>
        <dbReference type="ChEBI" id="CHEBI:24875"/>
    </cofactor>
</comment>
<comment type="pathway">
    <text>Alkene biosynthesis; ethylene biosynthesis via S-adenosyl-L-methionine; ethylene from S-adenosyl-L-methionine: step 2/2.</text>
</comment>
<comment type="tissue specificity">
    <text evidence="2 4">Expressed in vegetative tissues. Expressed constitutively at a low level in leaves and blades.</text>
</comment>
<comment type="induction">
    <text evidence="3 4">Strongly induced by wounding, ethrel, iron, ethylene and 1-amino-cyclopropane-carboxylic acid (ACC). Accumulates in response to very-long-chain fatty acids (VLCFAs C20:0 to C30:0).</text>
</comment>
<comment type="similarity">
    <text evidence="5">Belongs to the iron/ascorbate-dependent oxidoreductase family.</text>
</comment>
<feature type="chain" id="PRO_0000067252" description="1-aminocyclopropane-1-carboxylate oxidase 4">
    <location>
        <begin position="1"/>
        <end position="323"/>
    </location>
</feature>
<feature type="domain" description="Fe2OG dioxygenase" evidence="1">
    <location>
        <begin position="153"/>
        <end position="254"/>
    </location>
</feature>
<feature type="binding site" evidence="1">
    <location>
        <position position="177"/>
    </location>
    <ligand>
        <name>Fe cation</name>
        <dbReference type="ChEBI" id="CHEBI:24875"/>
    </ligand>
</feature>
<feature type="binding site" evidence="1">
    <location>
        <position position="179"/>
    </location>
    <ligand>
        <name>Fe cation</name>
        <dbReference type="ChEBI" id="CHEBI:24875"/>
    </ligand>
</feature>
<feature type="binding site" evidence="1">
    <location>
        <position position="234"/>
    </location>
    <ligand>
        <name>Fe cation</name>
        <dbReference type="ChEBI" id="CHEBI:24875"/>
    </ligand>
</feature>
<feature type="binding site" evidence="1">
    <location>
        <position position="245"/>
    </location>
    <ligand>
        <name>2-oxoglutarate</name>
        <dbReference type="ChEBI" id="CHEBI:16810"/>
    </ligand>
</feature>
<feature type="modified residue" description="N-acetylmethionine" evidence="6">
    <location>
        <position position="1"/>
    </location>
</feature>
<feature type="sequence conflict" description="In Ref. 1; CAA47251." evidence="5" ref="1">
    <original>A</original>
    <variation>V</variation>
    <location>
        <position position="263"/>
    </location>
</feature>
<feature type="sequence conflict" description="In Ref. 4; AAK43970." evidence="5" ref="4">
    <original>Y</original>
    <variation>C</variation>
    <location>
        <position position="291"/>
    </location>
</feature>
<gene>
    <name type="primary">ACO4</name>
    <name type="synonym">ACO1</name>
    <name type="synonym">EAT1</name>
    <name type="ordered locus">At1g05010</name>
    <name type="ORF">T7A14.12</name>
</gene>
<reference key="1">
    <citation type="journal article" date="1993" name="Gene">
        <title>Isolation and characterization of a gene involved in ethylene biosynthesis from Arabidopsis thaliana.</title>
        <authorList>
            <person name="Gomez-Lim M.A."/>
            <person name="Valdez-Lopez V.M."/>
            <person name="Cruz-Hernandez A."/>
            <person name="Saucedo-Arias L.J."/>
        </authorList>
    </citation>
    <scope>NUCLEOTIDE SEQUENCE [MRNA]</scope>
    <source>
        <strain>cv. Columbia</strain>
    </source>
</reference>
<reference key="2">
    <citation type="journal article" date="2000" name="Nature">
        <title>Sequence and analysis of chromosome 1 of the plant Arabidopsis thaliana.</title>
        <authorList>
            <person name="Theologis A."/>
            <person name="Ecker J.R."/>
            <person name="Palm C.J."/>
            <person name="Federspiel N.A."/>
            <person name="Kaul S."/>
            <person name="White O."/>
            <person name="Alonso J."/>
            <person name="Altafi H."/>
            <person name="Araujo R."/>
            <person name="Bowman C.L."/>
            <person name="Brooks S.Y."/>
            <person name="Buehler E."/>
            <person name="Chan A."/>
            <person name="Chao Q."/>
            <person name="Chen H."/>
            <person name="Cheuk R.F."/>
            <person name="Chin C.W."/>
            <person name="Chung M.K."/>
            <person name="Conn L."/>
            <person name="Conway A.B."/>
            <person name="Conway A.R."/>
            <person name="Creasy T.H."/>
            <person name="Dewar K."/>
            <person name="Dunn P."/>
            <person name="Etgu P."/>
            <person name="Feldblyum T.V."/>
            <person name="Feng J.-D."/>
            <person name="Fong B."/>
            <person name="Fujii C.Y."/>
            <person name="Gill J.E."/>
            <person name="Goldsmith A.D."/>
            <person name="Haas B."/>
            <person name="Hansen N.F."/>
            <person name="Hughes B."/>
            <person name="Huizar L."/>
            <person name="Hunter J.L."/>
            <person name="Jenkins J."/>
            <person name="Johnson-Hopson C."/>
            <person name="Khan S."/>
            <person name="Khaykin E."/>
            <person name="Kim C.J."/>
            <person name="Koo H.L."/>
            <person name="Kremenetskaia I."/>
            <person name="Kurtz D.B."/>
            <person name="Kwan A."/>
            <person name="Lam B."/>
            <person name="Langin-Hooper S."/>
            <person name="Lee A."/>
            <person name="Lee J.M."/>
            <person name="Lenz C.A."/>
            <person name="Li J.H."/>
            <person name="Li Y.-P."/>
            <person name="Lin X."/>
            <person name="Liu S.X."/>
            <person name="Liu Z.A."/>
            <person name="Luros J.S."/>
            <person name="Maiti R."/>
            <person name="Marziali A."/>
            <person name="Militscher J."/>
            <person name="Miranda M."/>
            <person name="Nguyen M."/>
            <person name="Nierman W.C."/>
            <person name="Osborne B.I."/>
            <person name="Pai G."/>
            <person name="Peterson J."/>
            <person name="Pham P.K."/>
            <person name="Rizzo M."/>
            <person name="Rooney T."/>
            <person name="Rowley D."/>
            <person name="Sakano H."/>
            <person name="Salzberg S.L."/>
            <person name="Schwartz J.R."/>
            <person name="Shinn P."/>
            <person name="Southwick A.M."/>
            <person name="Sun H."/>
            <person name="Tallon L.J."/>
            <person name="Tambunga G."/>
            <person name="Toriumi M.J."/>
            <person name="Town C.D."/>
            <person name="Utterback T."/>
            <person name="Van Aken S."/>
            <person name="Vaysberg M."/>
            <person name="Vysotskaia V.S."/>
            <person name="Walker M."/>
            <person name="Wu D."/>
            <person name="Yu G."/>
            <person name="Fraser C.M."/>
            <person name="Venter J.C."/>
            <person name="Davis R.W."/>
        </authorList>
    </citation>
    <scope>NUCLEOTIDE SEQUENCE [LARGE SCALE GENOMIC DNA]</scope>
    <source>
        <strain>cv. Columbia</strain>
    </source>
</reference>
<reference key="3">
    <citation type="journal article" date="2017" name="Plant J.">
        <title>Araport11: a complete reannotation of the Arabidopsis thaliana reference genome.</title>
        <authorList>
            <person name="Cheng C.Y."/>
            <person name="Krishnakumar V."/>
            <person name="Chan A.P."/>
            <person name="Thibaud-Nissen F."/>
            <person name="Schobel S."/>
            <person name="Town C.D."/>
        </authorList>
    </citation>
    <scope>GENOME REANNOTATION</scope>
    <source>
        <strain>cv. Columbia</strain>
    </source>
</reference>
<reference key="4">
    <citation type="journal article" date="2003" name="Science">
        <title>Empirical analysis of transcriptional activity in the Arabidopsis genome.</title>
        <authorList>
            <person name="Yamada K."/>
            <person name="Lim J."/>
            <person name="Dale J.M."/>
            <person name="Chen H."/>
            <person name="Shinn P."/>
            <person name="Palm C.J."/>
            <person name="Southwick A.M."/>
            <person name="Wu H.C."/>
            <person name="Kim C.J."/>
            <person name="Nguyen M."/>
            <person name="Pham P.K."/>
            <person name="Cheuk R.F."/>
            <person name="Karlin-Newmann G."/>
            <person name="Liu S.X."/>
            <person name="Lam B."/>
            <person name="Sakano H."/>
            <person name="Wu T."/>
            <person name="Yu G."/>
            <person name="Miranda M."/>
            <person name="Quach H.L."/>
            <person name="Tripp M."/>
            <person name="Chang C.H."/>
            <person name="Lee J.M."/>
            <person name="Toriumi M.J."/>
            <person name="Chan M.M."/>
            <person name="Tang C.C."/>
            <person name="Onodera C.S."/>
            <person name="Deng J.M."/>
            <person name="Akiyama K."/>
            <person name="Ansari Y."/>
            <person name="Arakawa T."/>
            <person name="Banh J."/>
            <person name="Banno F."/>
            <person name="Bowser L."/>
            <person name="Brooks S.Y."/>
            <person name="Carninci P."/>
            <person name="Chao Q."/>
            <person name="Choy N."/>
            <person name="Enju A."/>
            <person name="Goldsmith A.D."/>
            <person name="Gurjal M."/>
            <person name="Hansen N.F."/>
            <person name="Hayashizaki Y."/>
            <person name="Johnson-Hopson C."/>
            <person name="Hsuan V.W."/>
            <person name="Iida K."/>
            <person name="Karnes M."/>
            <person name="Khan S."/>
            <person name="Koesema E."/>
            <person name="Ishida J."/>
            <person name="Jiang P.X."/>
            <person name="Jones T."/>
            <person name="Kawai J."/>
            <person name="Kamiya A."/>
            <person name="Meyers C."/>
            <person name="Nakajima M."/>
            <person name="Narusaka M."/>
            <person name="Seki M."/>
            <person name="Sakurai T."/>
            <person name="Satou M."/>
            <person name="Tamse R."/>
            <person name="Vaysberg M."/>
            <person name="Wallender E.K."/>
            <person name="Wong C."/>
            <person name="Yamamura Y."/>
            <person name="Yuan S."/>
            <person name="Shinozaki K."/>
            <person name="Davis R.W."/>
            <person name="Theologis A."/>
            <person name="Ecker J.R."/>
        </authorList>
    </citation>
    <scope>NUCLEOTIDE SEQUENCE [LARGE SCALE MRNA]</scope>
    <source>
        <strain>cv. Columbia</strain>
    </source>
</reference>
<reference key="5">
    <citation type="journal article" date="2003" name="Plant Physiol.">
        <title>Ethylene and auxin control the Arabidopsis response to decreased light intensity.</title>
        <authorList>
            <person name="Vandenbussche F."/>
            <person name="Vriezen W.H."/>
            <person name="Smalle J."/>
            <person name="Laarhoven L.J.J."/>
            <person name="Harren F.J.M."/>
            <person name="Van Der Straeten D."/>
        </authorList>
    </citation>
    <scope>TISSUE SPECIFICITY</scope>
</reference>
<reference key="6">
    <citation type="journal article" date="2004" name="Plant J.">
        <title>Transcriptional profiling by cDNA-AFLP and microarray analysis reveals novel insights into the early response to ethylene in Arabidopsis.</title>
        <authorList>
            <person name="De Paepe A."/>
            <person name="Vuylsteke M."/>
            <person name="Van Hummelen P."/>
            <person name="Zabeau M."/>
            <person name="Van Der Straeten D."/>
        </authorList>
    </citation>
    <scope>INDUCTION BY ETHYLENE</scope>
    <source>
        <strain>cv. Columbia</strain>
    </source>
</reference>
<reference key="7">
    <citation type="journal article" date="2007" name="Plant Cell">
        <title>Saturated very-long-chain fatty acids promote cotton fiber and Arabidopsis cell elongation by activating ethylene biosynthesis.</title>
        <authorList>
            <person name="Qin Y.-M."/>
            <person name="Hu C.-Y."/>
            <person name="Pang Y."/>
            <person name="Kastaniotis A.J."/>
            <person name="Hiltunen J.K."/>
            <person name="Zhu Y.-X."/>
        </authorList>
    </citation>
    <scope>FUNCTION</scope>
    <scope>INDUCTION BY VERY-LONG-CHAIN FATTY ACIDS</scope>
    <scope>TISSUE SPECIFICITY</scope>
    <source>
        <strain>cv. Columbia</strain>
    </source>
</reference>
<reference key="8">
    <citation type="journal article" date="2012" name="Mol. Cell. Proteomics">
        <title>Comparative large-scale characterisation of plant vs. mammal proteins reveals similar and idiosyncratic N-alpha acetylation features.</title>
        <authorList>
            <person name="Bienvenut W.V."/>
            <person name="Sumpton D."/>
            <person name="Martinez A."/>
            <person name="Lilla S."/>
            <person name="Espagne C."/>
            <person name="Meinnel T."/>
            <person name="Giglione C."/>
        </authorList>
    </citation>
    <scope>ACETYLATION [LARGE SCALE ANALYSIS] AT MET-1</scope>
    <scope>IDENTIFICATION BY MASS SPECTROMETRY [LARGE SCALE ANALYSIS]</scope>
</reference>